<proteinExistence type="inferred from homology"/>
<organism>
    <name type="scientific">Cupriavidus pinatubonensis (strain JMP 134 / LMG 1197)</name>
    <name type="common">Cupriavidus necator (strain JMP 134)</name>
    <dbReference type="NCBI Taxonomy" id="264198"/>
    <lineage>
        <taxon>Bacteria</taxon>
        <taxon>Pseudomonadati</taxon>
        <taxon>Pseudomonadota</taxon>
        <taxon>Betaproteobacteria</taxon>
        <taxon>Burkholderiales</taxon>
        <taxon>Burkholderiaceae</taxon>
        <taxon>Cupriavidus</taxon>
    </lineage>
</organism>
<protein>
    <recommendedName>
        <fullName evidence="1">Putative glutamate--cysteine ligase 2</fullName>
        <ecNumber evidence="1">6.3.2.2</ecNumber>
    </recommendedName>
    <alternativeName>
        <fullName evidence="1">Gamma-glutamylcysteine synthetase 2</fullName>
        <shortName evidence="1">GCS 2</shortName>
        <shortName evidence="1">Gamma-GCS 2</shortName>
    </alternativeName>
</protein>
<evidence type="ECO:0000255" key="1">
    <source>
        <dbReference type="HAMAP-Rule" id="MF_01609"/>
    </source>
</evidence>
<feature type="chain" id="PRO_0000255806" description="Putative glutamate--cysteine ligase 2">
    <location>
        <begin position="1"/>
        <end position="371"/>
    </location>
</feature>
<dbReference type="EC" id="6.3.2.2" evidence="1"/>
<dbReference type="EMBL" id="CP000090">
    <property type="protein sequence ID" value="AAZ62694.1"/>
    <property type="molecule type" value="Genomic_DNA"/>
</dbReference>
<dbReference type="SMR" id="Q46VZ0"/>
<dbReference type="STRING" id="264198.Reut_A3336"/>
<dbReference type="KEGG" id="reu:Reut_A3336"/>
<dbReference type="eggNOG" id="COG2170">
    <property type="taxonomic scope" value="Bacteria"/>
</dbReference>
<dbReference type="HOGENOM" id="CLU_044848_1_1_4"/>
<dbReference type="OrthoDB" id="9769628at2"/>
<dbReference type="GO" id="GO:0005524">
    <property type="term" value="F:ATP binding"/>
    <property type="evidence" value="ECO:0007669"/>
    <property type="project" value="UniProtKB-KW"/>
</dbReference>
<dbReference type="GO" id="GO:0004357">
    <property type="term" value="F:glutamate-cysteine ligase activity"/>
    <property type="evidence" value="ECO:0007669"/>
    <property type="project" value="UniProtKB-EC"/>
</dbReference>
<dbReference type="GO" id="GO:0042398">
    <property type="term" value="P:modified amino acid biosynthetic process"/>
    <property type="evidence" value="ECO:0007669"/>
    <property type="project" value="InterPro"/>
</dbReference>
<dbReference type="Gene3D" id="3.30.590.20">
    <property type="match status" value="1"/>
</dbReference>
<dbReference type="HAMAP" id="MF_01609">
    <property type="entry name" value="Glu_cys_ligase_2"/>
    <property type="match status" value="1"/>
</dbReference>
<dbReference type="InterPro" id="IPR050141">
    <property type="entry name" value="GCL_type2/YbdK_subfam"/>
</dbReference>
<dbReference type="InterPro" id="IPR006336">
    <property type="entry name" value="GCS2"/>
</dbReference>
<dbReference type="InterPro" id="IPR014746">
    <property type="entry name" value="Gln_synth/guanido_kin_cat_dom"/>
</dbReference>
<dbReference type="InterPro" id="IPR011793">
    <property type="entry name" value="YbdK"/>
</dbReference>
<dbReference type="NCBIfam" id="TIGR02050">
    <property type="entry name" value="gshA_cyan_rel"/>
    <property type="match status" value="1"/>
</dbReference>
<dbReference type="NCBIfam" id="NF010040">
    <property type="entry name" value="PRK13516.1"/>
    <property type="match status" value="1"/>
</dbReference>
<dbReference type="PANTHER" id="PTHR36510">
    <property type="entry name" value="GLUTAMATE--CYSTEINE LIGASE 2-RELATED"/>
    <property type="match status" value="1"/>
</dbReference>
<dbReference type="PANTHER" id="PTHR36510:SF1">
    <property type="entry name" value="GLUTAMATE--CYSTEINE LIGASE 2-RELATED"/>
    <property type="match status" value="1"/>
</dbReference>
<dbReference type="Pfam" id="PF04107">
    <property type="entry name" value="GCS2"/>
    <property type="match status" value="1"/>
</dbReference>
<dbReference type="SUPFAM" id="SSF55931">
    <property type="entry name" value="Glutamine synthetase/guanido kinase"/>
    <property type="match status" value="1"/>
</dbReference>
<comment type="function">
    <text evidence="1">ATP-dependent carboxylate-amine ligase which exhibits weak glutamate--cysteine ligase activity.</text>
</comment>
<comment type="catalytic activity">
    <reaction evidence="1">
        <text>L-cysteine + L-glutamate + ATP = gamma-L-glutamyl-L-cysteine + ADP + phosphate + H(+)</text>
        <dbReference type="Rhea" id="RHEA:13285"/>
        <dbReference type="ChEBI" id="CHEBI:15378"/>
        <dbReference type="ChEBI" id="CHEBI:29985"/>
        <dbReference type="ChEBI" id="CHEBI:30616"/>
        <dbReference type="ChEBI" id="CHEBI:35235"/>
        <dbReference type="ChEBI" id="CHEBI:43474"/>
        <dbReference type="ChEBI" id="CHEBI:58173"/>
        <dbReference type="ChEBI" id="CHEBI:456216"/>
        <dbReference type="EC" id="6.3.2.2"/>
    </reaction>
</comment>
<comment type="similarity">
    <text evidence="1">Belongs to the glutamate--cysteine ligase type 2 family. YbdK subfamily.</text>
</comment>
<accession>Q46VZ0</accession>
<sequence length="371" mass="41804">MSLEPFKHSEALTFGVELELQLVNRHDYDLAPFAPDLLRALKGAQHAGDIKPEISPSMIEISTGICHTYQQALDELTTMRDLMQAASRSLNIGISGGGTHPFQQWADRIISDSPRYQYISELYGYLAKQFTVFGQHVHIGCPSADESLFLLHAIGRYVPHFVALAASSPYVQGVDTGFASARLNSVAAFPMSGRAPFLLTWDAFTAYFEKMRNTGVIESMKDFYWDIRPKPEFGTIEVRVMDTPLTVERACDIAAYIQMLARYLLLSRPFMPQEDDYLVYTFNRFQACRFGLEGEYVHPNELTRRPIAEHILSICDALVPHAEALGSMQALANIRALAENRNGDAEWLRQVDADARTQRETVRQACERWAA</sequence>
<name>GCS2_CUPPJ</name>
<reference key="1">
    <citation type="journal article" date="2010" name="PLoS ONE">
        <title>The complete multipartite genome sequence of Cupriavidus necator JMP134, a versatile pollutant degrader.</title>
        <authorList>
            <person name="Lykidis A."/>
            <person name="Perez-Pantoja D."/>
            <person name="Ledger T."/>
            <person name="Mavromatis K."/>
            <person name="Anderson I.J."/>
            <person name="Ivanova N.N."/>
            <person name="Hooper S.D."/>
            <person name="Lapidus A."/>
            <person name="Lucas S."/>
            <person name="Gonzalez B."/>
            <person name="Kyrpides N.C."/>
        </authorList>
    </citation>
    <scope>NUCLEOTIDE SEQUENCE [LARGE SCALE GENOMIC DNA]</scope>
    <source>
        <strain>JMP134 / LMG 1197</strain>
    </source>
</reference>
<keyword id="KW-0067">ATP-binding</keyword>
<keyword id="KW-0436">Ligase</keyword>
<keyword id="KW-0547">Nucleotide-binding</keyword>
<gene>
    <name type="ordered locus">Reut_A3336</name>
</gene>